<accession>C3N9B3</accession>
<reference key="1">
    <citation type="journal article" date="2009" name="Proc. Natl. Acad. Sci. U.S.A.">
        <title>Biogeography of the Sulfolobus islandicus pan-genome.</title>
        <authorList>
            <person name="Reno M.L."/>
            <person name="Held N.L."/>
            <person name="Fields C.J."/>
            <person name="Burke P.V."/>
            <person name="Whitaker R.J."/>
        </authorList>
    </citation>
    <scope>NUCLEOTIDE SEQUENCE [LARGE SCALE GENOMIC DNA]</scope>
    <source>
        <strain>Y.G.57.14 / Yellowstone #1</strain>
    </source>
</reference>
<comment type="function">
    <text evidence="1">Catalyzes the attachment of threonine to tRNA(Thr) in a two-step reaction: L-threonine is first activated by ATP to form Thr-AMP and then transferred to the acceptor end of tRNA(Thr). Also activates L-serine and transfers it to tRNA(Thr) but cannot deacylate incorrectly charged amino acid; unlike most archaea the editing function is found in a freestanding protein.</text>
</comment>
<comment type="catalytic activity">
    <reaction evidence="3">
        <text>tRNA(Thr) + L-threonine + ATP = L-threonyl-tRNA(Thr) + AMP + diphosphate + H(+)</text>
        <dbReference type="Rhea" id="RHEA:24624"/>
        <dbReference type="Rhea" id="RHEA-COMP:9670"/>
        <dbReference type="Rhea" id="RHEA-COMP:9704"/>
        <dbReference type="ChEBI" id="CHEBI:15378"/>
        <dbReference type="ChEBI" id="CHEBI:30616"/>
        <dbReference type="ChEBI" id="CHEBI:33019"/>
        <dbReference type="ChEBI" id="CHEBI:57926"/>
        <dbReference type="ChEBI" id="CHEBI:78442"/>
        <dbReference type="ChEBI" id="CHEBI:78534"/>
        <dbReference type="ChEBI" id="CHEBI:456215"/>
        <dbReference type="EC" id="6.1.1.3"/>
    </reaction>
</comment>
<comment type="cofactor">
    <cofactor evidence="3">
        <name>Zn(2+)</name>
        <dbReference type="ChEBI" id="CHEBI:29105"/>
    </cofactor>
    <text evidence="3">Binds 1 zinc ion per subunit.</text>
</comment>
<comment type="subunit">
    <text evidence="1 2">Homodimer (By similarity). Probably interacts with its editing subunit (By similarity).</text>
</comment>
<comment type="subcellular location">
    <subcellularLocation>
        <location evidence="3">Cytoplasm</location>
    </subcellularLocation>
</comment>
<comment type="similarity">
    <text evidence="3">Belongs to the class-II aminoacyl-tRNA synthetase family.</text>
</comment>
<feature type="chain" id="PRO_1000203925" description="Threonine--tRNA ligase catalytic subunit">
    <location>
        <begin position="1"/>
        <end position="545"/>
    </location>
</feature>
<feature type="region of interest" description="Catalytic" evidence="3">
    <location>
        <begin position="139"/>
        <end position="433"/>
    </location>
</feature>
<feature type="binding site" evidence="3">
    <location>
        <position position="231"/>
    </location>
    <ligand>
        <name>Zn(2+)</name>
        <dbReference type="ChEBI" id="CHEBI:29105"/>
    </ligand>
</feature>
<feature type="binding site" evidence="3">
    <location>
        <position position="282"/>
    </location>
    <ligand>
        <name>Zn(2+)</name>
        <dbReference type="ChEBI" id="CHEBI:29105"/>
    </ligand>
</feature>
<feature type="binding site" evidence="3">
    <location>
        <position position="410"/>
    </location>
    <ligand>
        <name>Zn(2+)</name>
        <dbReference type="ChEBI" id="CHEBI:29105"/>
    </ligand>
</feature>
<dbReference type="EC" id="6.1.1.3" evidence="3"/>
<dbReference type="EMBL" id="CP001403">
    <property type="protein sequence ID" value="ACP44575.1"/>
    <property type="molecule type" value="Genomic_DNA"/>
</dbReference>
<dbReference type="RefSeq" id="WP_010923890.1">
    <property type="nucleotide sequence ID" value="NC_012622.1"/>
</dbReference>
<dbReference type="SMR" id="C3N9B3"/>
<dbReference type="GeneID" id="7808880"/>
<dbReference type="KEGG" id="siy:YG5714_0281"/>
<dbReference type="HOGENOM" id="CLU_008554_0_1_2"/>
<dbReference type="Proteomes" id="UP000002308">
    <property type="component" value="Chromosome"/>
</dbReference>
<dbReference type="GO" id="GO:0005737">
    <property type="term" value="C:cytoplasm"/>
    <property type="evidence" value="ECO:0007669"/>
    <property type="project" value="UniProtKB-SubCell"/>
</dbReference>
<dbReference type="GO" id="GO:0005524">
    <property type="term" value="F:ATP binding"/>
    <property type="evidence" value="ECO:0007669"/>
    <property type="project" value="UniProtKB-UniRule"/>
</dbReference>
<dbReference type="GO" id="GO:0046872">
    <property type="term" value="F:metal ion binding"/>
    <property type="evidence" value="ECO:0007669"/>
    <property type="project" value="UniProtKB-KW"/>
</dbReference>
<dbReference type="GO" id="GO:0004829">
    <property type="term" value="F:threonine-tRNA ligase activity"/>
    <property type="evidence" value="ECO:0007669"/>
    <property type="project" value="UniProtKB-UniRule"/>
</dbReference>
<dbReference type="GO" id="GO:0000049">
    <property type="term" value="F:tRNA binding"/>
    <property type="evidence" value="ECO:0007669"/>
    <property type="project" value="UniProtKB-KW"/>
</dbReference>
<dbReference type="GO" id="GO:0006435">
    <property type="term" value="P:threonyl-tRNA aminoacylation"/>
    <property type="evidence" value="ECO:0007669"/>
    <property type="project" value="UniProtKB-UniRule"/>
</dbReference>
<dbReference type="CDD" id="cd00860">
    <property type="entry name" value="ThrRS_anticodon"/>
    <property type="match status" value="1"/>
</dbReference>
<dbReference type="CDD" id="cd00771">
    <property type="entry name" value="ThrRS_core"/>
    <property type="match status" value="1"/>
</dbReference>
<dbReference type="FunFam" id="3.30.930.10:FF:000002">
    <property type="entry name" value="Threonine--tRNA ligase"/>
    <property type="match status" value="1"/>
</dbReference>
<dbReference type="FunFam" id="3.40.50.800:FF:000001">
    <property type="entry name" value="Threonine--tRNA ligase"/>
    <property type="match status" value="1"/>
</dbReference>
<dbReference type="Gene3D" id="3.40.50.800">
    <property type="entry name" value="Anticodon-binding domain"/>
    <property type="match status" value="1"/>
</dbReference>
<dbReference type="Gene3D" id="3.30.930.10">
    <property type="entry name" value="Bira Bifunctional Protein, Domain 2"/>
    <property type="match status" value="1"/>
</dbReference>
<dbReference type="HAMAP" id="MF_00184">
    <property type="entry name" value="Thr_tRNA_synth"/>
    <property type="match status" value="1"/>
</dbReference>
<dbReference type="InterPro" id="IPR002314">
    <property type="entry name" value="aa-tRNA-synt_IIb"/>
</dbReference>
<dbReference type="InterPro" id="IPR006195">
    <property type="entry name" value="aa-tRNA-synth_II"/>
</dbReference>
<dbReference type="InterPro" id="IPR045864">
    <property type="entry name" value="aa-tRNA-synth_II/BPL/LPL"/>
</dbReference>
<dbReference type="InterPro" id="IPR004154">
    <property type="entry name" value="Anticodon-bd"/>
</dbReference>
<dbReference type="InterPro" id="IPR036621">
    <property type="entry name" value="Anticodon-bd_dom_sf"/>
</dbReference>
<dbReference type="InterPro" id="IPR002320">
    <property type="entry name" value="Thr-tRNA-ligase_IIa"/>
</dbReference>
<dbReference type="InterPro" id="IPR018163">
    <property type="entry name" value="Thr/Ala-tRNA-synth_IIc_edit"/>
</dbReference>
<dbReference type="InterPro" id="IPR047246">
    <property type="entry name" value="ThrRS_anticodon"/>
</dbReference>
<dbReference type="InterPro" id="IPR033728">
    <property type="entry name" value="ThrRS_core"/>
</dbReference>
<dbReference type="NCBIfam" id="TIGR00418">
    <property type="entry name" value="thrS"/>
    <property type="match status" value="1"/>
</dbReference>
<dbReference type="PANTHER" id="PTHR11451:SF44">
    <property type="entry name" value="THREONINE--TRNA LIGASE, CHLOROPLASTIC_MITOCHONDRIAL 2"/>
    <property type="match status" value="1"/>
</dbReference>
<dbReference type="PANTHER" id="PTHR11451">
    <property type="entry name" value="THREONINE-TRNA LIGASE"/>
    <property type="match status" value="1"/>
</dbReference>
<dbReference type="Pfam" id="PF03129">
    <property type="entry name" value="HGTP_anticodon"/>
    <property type="match status" value="1"/>
</dbReference>
<dbReference type="Pfam" id="PF00587">
    <property type="entry name" value="tRNA-synt_2b"/>
    <property type="match status" value="1"/>
</dbReference>
<dbReference type="PRINTS" id="PR01047">
    <property type="entry name" value="TRNASYNTHTHR"/>
</dbReference>
<dbReference type="SUPFAM" id="SSF52954">
    <property type="entry name" value="Class II aaRS ABD-related"/>
    <property type="match status" value="1"/>
</dbReference>
<dbReference type="SUPFAM" id="SSF55681">
    <property type="entry name" value="Class II aaRS and biotin synthetases"/>
    <property type="match status" value="1"/>
</dbReference>
<dbReference type="SUPFAM" id="SSF55186">
    <property type="entry name" value="ThrRS/AlaRS common domain"/>
    <property type="match status" value="1"/>
</dbReference>
<dbReference type="PROSITE" id="PS50862">
    <property type="entry name" value="AA_TRNA_LIGASE_II"/>
    <property type="match status" value="1"/>
</dbReference>
<evidence type="ECO:0000250" key="1">
    <source>
        <dbReference type="UniProtKB" id="Q97VW8"/>
    </source>
</evidence>
<evidence type="ECO:0000250" key="2">
    <source>
        <dbReference type="UniProtKB" id="Q9YDW0"/>
    </source>
</evidence>
<evidence type="ECO:0000255" key="3">
    <source>
        <dbReference type="HAMAP-Rule" id="MF_00184"/>
    </source>
</evidence>
<evidence type="ECO:0000305" key="4"/>
<name>SYTC_SACI7</name>
<organism>
    <name type="scientific">Saccharolobus islandicus (strain Y.G.57.14 / Yellowstone #1)</name>
    <name type="common">Sulfolobus islandicus</name>
    <dbReference type="NCBI Taxonomy" id="439386"/>
    <lineage>
        <taxon>Archaea</taxon>
        <taxon>Thermoproteota</taxon>
        <taxon>Thermoprotei</taxon>
        <taxon>Sulfolobales</taxon>
        <taxon>Sulfolobaceae</taxon>
        <taxon>Saccharolobus</taxon>
    </lineage>
</organism>
<protein>
    <recommendedName>
        <fullName>Threonine--tRNA ligase catalytic subunit</fullName>
        <ecNumber evidence="3">6.1.1.3</ecNumber>
    </recommendedName>
    <alternativeName>
        <fullName>Threonyl-tRNA synthetase catalytic subunit</fullName>
        <shortName>ThrRS-cat</shortName>
    </alternativeName>
</protein>
<gene>
    <name evidence="4" type="primary">thrS-cat</name>
    <name evidence="3" type="synonym">thrS</name>
    <name type="ordered locus">YG5714_0281</name>
</gene>
<keyword id="KW-0030">Aminoacyl-tRNA synthetase</keyword>
<keyword id="KW-0067">ATP-binding</keyword>
<keyword id="KW-0963">Cytoplasm</keyword>
<keyword id="KW-0436">Ligase</keyword>
<keyword id="KW-0479">Metal-binding</keyword>
<keyword id="KW-0547">Nucleotide-binding</keyword>
<keyword id="KW-0648">Protein biosynthesis</keyword>
<keyword id="KW-0694">RNA-binding</keyword>
<keyword id="KW-0820">tRNA-binding</keyword>
<keyword id="KW-0862">Zinc</keyword>
<sequence length="545" mass="63231">MESYKPVWLKGAVILAINLIDKGYKPVAVGLGERDFYIDVKSDTSITLDEVKKAINENVLANVSIENNQIVYKGNKVSIIEDKVSISTNLNPKYFEILNISTHHPNPNEQYVRIRGVAFETEEQLKDYLSWLEKAEETDHRLIGEKLDLFSFHEEAGSGLVLFHPKGQTIRNELIAFMREINDSMGYQEVYTSHVFKTDIWKISGHYTLYRDKLIVFNMEGDEYGVKPMNCPAHILIYKSKPRTYRDLPIRFSEFGHVYRWEKKGELYGLLRVRGFVQDDGHIFLREDQLREEIKMLISKTVEVWHKFGFKDDDIKPYLSTRPDESIGSDELWEKATNALISALQESGLKFGIKEKEGAFYGPKIDFEIRDSLGRWWQLSTIQVDFNLPERFKLEYIDKDGIKKRPVMVHRAIYGSIDRFVAILLEHFKGKLPTWLSSVQVRVLPITDEVNEYAEKVLNDMRKRRIRAEIDYAGETLSKRIKNAYDQGVPYILIVGKKEASEGTVTVRARGNIEVRNVKFEKFLELLITEIAQRDVEQTTVKALK</sequence>
<proteinExistence type="inferred from homology"/>